<accession>P29507</accession>
<sequence>MIKNGLPHEPEFQQAYNELVSALEESTLFTEKPEYKKVIPVVSIPERIIQFRVAWENDNGDVEVNNGFRVQFNSSLGPYKGGLRFHPSVNLSILKFLGFEQIFKNALTGLSMGGGKGGCDFNPKGRSDGEIRRFCVAFMRQLARYIGADTDVPAGDIGVGGREIGYLFGAYKQMQNNWYGVLTGKGLTWGGSLIRPEATGYVSFTTLKKMIEKATNGKESFKGKRVELSGSGNVAQYAALKVIELGGIVVSLSDSKGSIVSKNGIVPEQVLEIAAAKLKFKSLEEITKESVKLFSGENSVEYLAGVRPWAKVGHFDVALPSATQKEVSGEEEAKALVEAGCKYIAEGSNMGSTKEAIDVFEANRSNNVWYAPGKAANCGGVAVSGLEMAQNSQRVQWSAEEVDAKLKNIMYTCFDNCYDPAIKYSAEKNADGLPSLLKGANIASFIKVADAMFDQGDVY</sequence>
<proteinExistence type="inferred from homology"/>
<comment type="catalytic activity">
    <reaction>
        <text>L-glutamate + NADP(+) + H2O = 2-oxoglutarate + NH4(+) + NADPH + H(+)</text>
        <dbReference type="Rhea" id="RHEA:11612"/>
        <dbReference type="ChEBI" id="CHEBI:15377"/>
        <dbReference type="ChEBI" id="CHEBI:15378"/>
        <dbReference type="ChEBI" id="CHEBI:16810"/>
        <dbReference type="ChEBI" id="CHEBI:28938"/>
        <dbReference type="ChEBI" id="CHEBI:29985"/>
        <dbReference type="ChEBI" id="CHEBI:57783"/>
        <dbReference type="ChEBI" id="CHEBI:58349"/>
        <dbReference type="EC" id="1.4.1.4"/>
    </reaction>
</comment>
<comment type="subunit">
    <text evidence="1">Homohexamer.</text>
</comment>
<comment type="similarity">
    <text evidence="3">Belongs to the Glu/Leu/Phe/Val dehydrogenases family.</text>
</comment>
<keyword id="KW-0521">NADP</keyword>
<keyword id="KW-0560">Oxidoreductase</keyword>
<gene>
    <name type="primary">GDHA</name>
</gene>
<feature type="chain" id="PRO_0000182796" description="NADP-specific glutamate dehydrogenase">
    <location>
        <begin position="1"/>
        <end position="459"/>
    </location>
</feature>
<feature type="active site" evidence="2">
    <location>
        <position position="116"/>
    </location>
</feature>
<reference key="1">
    <citation type="journal article" date="1991" name="Curr. Genet.">
        <title>Cloning, sequencing and expression of the Schwanniomyces occidentalis NADP-dependent glutamate dehydrogenase gene.</title>
        <authorList>
            <person name="de Zoysa P.A."/>
            <person name="Connerton I.F."/>
            <person name="Watson D.C."/>
            <person name="Johnston J.R."/>
        </authorList>
    </citation>
    <scope>NUCLEOTIDE SEQUENCE [GENOMIC DNA]</scope>
</reference>
<protein>
    <recommendedName>
        <fullName>NADP-specific glutamate dehydrogenase</fullName>
        <shortName>NADP-GDH</shortName>
        <ecNumber>1.4.1.4</ecNumber>
    </recommendedName>
    <alternativeName>
        <fullName>NADP-dependent glutamate dehydrogenase</fullName>
    </alternativeName>
</protein>
<evidence type="ECO:0000250" key="1"/>
<evidence type="ECO:0000255" key="2">
    <source>
        <dbReference type="PROSITE-ProRule" id="PRU10011"/>
    </source>
</evidence>
<evidence type="ECO:0000305" key="3"/>
<dbReference type="EC" id="1.4.1.4"/>
<dbReference type="EMBL" id="S64476">
    <property type="protein sequence ID" value="AAB20267.1"/>
    <property type="molecule type" value="Genomic_DNA"/>
</dbReference>
<dbReference type="PIR" id="S17907">
    <property type="entry name" value="S17907"/>
</dbReference>
<dbReference type="SMR" id="P29507"/>
<dbReference type="GO" id="GO:0005829">
    <property type="term" value="C:cytosol"/>
    <property type="evidence" value="ECO:0007669"/>
    <property type="project" value="TreeGrafter"/>
</dbReference>
<dbReference type="GO" id="GO:0004354">
    <property type="term" value="F:glutamate dehydrogenase (NADP+) activity"/>
    <property type="evidence" value="ECO:0007669"/>
    <property type="project" value="UniProtKB-EC"/>
</dbReference>
<dbReference type="GO" id="GO:0006537">
    <property type="term" value="P:glutamate biosynthetic process"/>
    <property type="evidence" value="ECO:0007669"/>
    <property type="project" value="TreeGrafter"/>
</dbReference>
<dbReference type="FunFam" id="1.10.285.10:FF:000001">
    <property type="entry name" value="Glutamate dehydrogenase"/>
    <property type="match status" value="1"/>
</dbReference>
<dbReference type="FunFam" id="1.10.285.10:FF:000003">
    <property type="entry name" value="Glutamate dehydrogenase"/>
    <property type="match status" value="1"/>
</dbReference>
<dbReference type="FunFam" id="3.40.50.10860:FF:000002">
    <property type="entry name" value="Glutamate dehydrogenase"/>
    <property type="match status" value="1"/>
</dbReference>
<dbReference type="FunFam" id="3.40.50.720:FF:000030">
    <property type="entry name" value="Glutamate dehydrogenase"/>
    <property type="match status" value="1"/>
</dbReference>
<dbReference type="Gene3D" id="1.10.285.10">
    <property type="entry name" value="Glutamate Dehydrogenase, chain A, domain 3"/>
    <property type="match status" value="2"/>
</dbReference>
<dbReference type="Gene3D" id="3.40.50.10860">
    <property type="entry name" value="Leucine Dehydrogenase, chain A, domain 1"/>
    <property type="match status" value="1"/>
</dbReference>
<dbReference type="Gene3D" id="3.40.50.720">
    <property type="entry name" value="NAD(P)-binding Rossmann-like Domain"/>
    <property type="match status" value="1"/>
</dbReference>
<dbReference type="InterPro" id="IPR046346">
    <property type="entry name" value="Aminoacid_DH-like_N_sf"/>
</dbReference>
<dbReference type="InterPro" id="IPR006095">
    <property type="entry name" value="Glu/Leu/Phe/Val/Trp_DH"/>
</dbReference>
<dbReference type="InterPro" id="IPR006096">
    <property type="entry name" value="Glu/Leu/Phe/Val/Trp_DH_C"/>
</dbReference>
<dbReference type="InterPro" id="IPR006097">
    <property type="entry name" value="Glu/Leu/Phe/Val/Trp_DH_dimer"/>
</dbReference>
<dbReference type="InterPro" id="IPR033524">
    <property type="entry name" value="Glu/Leu/Phe/Val_DH_AS"/>
</dbReference>
<dbReference type="InterPro" id="IPR014362">
    <property type="entry name" value="Glu_DH"/>
</dbReference>
<dbReference type="InterPro" id="IPR050724">
    <property type="entry name" value="Glu_Leu_Phe_Val_DH"/>
</dbReference>
<dbReference type="InterPro" id="IPR036291">
    <property type="entry name" value="NAD(P)-bd_dom_sf"/>
</dbReference>
<dbReference type="NCBIfam" id="NF006929">
    <property type="entry name" value="PRK09414.1"/>
    <property type="match status" value="1"/>
</dbReference>
<dbReference type="PANTHER" id="PTHR43571">
    <property type="entry name" value="NADP-SPECIFIC GLUTAMATE DEHYDROGENASE 1-RELATED"/>
    <property type="match status" value="1"/>
</dbReference>
<dbReference type="PANTHER" id="PTHR43571:SF1">
    <property type="entry name" value="NADP-SPECIFIC GLUTAMATE DEHYDROGENASE 1-RELATED"/>
    <property type="match status" value="1"/>
</dbReference>
<dbReference type="Pfam" id="PF00208">
    <property type="entry name" value="ELFV_dehydrog"/>
    <property type="match status" value="1"/>
</dbReference>
<dbReference type="Pfam" id="PF02812">
    <property type="entry name" value="ELFV_dehydrog_N"/>
    <property type="match status" value="1"/>
</dbReference>
<dbReference type="PIRSF" id="PIRSF000185">
    <property type="entry name" value="Glu_DH"/>
    <property type="match status" value="1"/>
</dbReference>
<dbReference type="PRINTS" id="PR00082">
    <property type="entry name" value="GLFDHDRGNASE"/>
</dbReference>
<dbReference type="SMART" id="SM00839">
    <property type="entry name" value="ELFV_dehydrog"/>
    <property type="match status" value="1"/>
</dbReference>
<dbReference type="SUPFAM" id="SSF53223">
    <property type="entry name" value="Aminoacid dehydrogenase-like, N-terminal domain"/>
    <property type="match status" value="1"/>
</dbReference>
<dbReference type="SUPFAM" id="SSF51735">
    <property type="entry name" value="NAD(P)-binding Rossmann-fold domains"/>
    <property type="match status" value="1"/>
</dbReference>
<dbReference type="PROSITE" id="PS00074">
    <property type="entry name" value="GLFV_DEHYDROGENASE"/>
    <property type="match status" value="1"/>
</dbReference>
<name>DHE4_SCHOC</name>
<organism>
    <name type="scientific">Schwanniomyces occidentalis</name>
    <name type="common">Yeast</name>
    <name type="synonym">Debaryomyces occidentalis</name>
    <dbReference type="NCBI Taxonomy" id="27300"/>
    <lineage>
        <taxon>Eukaryota</taxon>
        <taxon>Fungi</taxon>
        <taxon>Dikarya</taxon>
        <taxon>Ascomycota</taxon>
        <taxon>Saccharomycotina</taxon>
        <taxon>Pichiomycetes</taxon>
        <taxon>Debaryomycetaceae</taxon>
        <taxon>Schwanniomyces</taxon>
    </lineage>
</organism>